<reference key="1">
    <citation type="journal article" date="2002" name="Mol. Microbiol.">
        <title>Genome sequence of Streptococcus agalactiae, a pathogen causing invasive neonatal disease.</title>
        <authorList>
            <person name="Glaser P."/>
            <person name="Rusniok C."/>
            <person name="Buchrieser C."/>
            <person name="Chevalier F."/>
            <person name="Frangeul L."/>
            <person name="Msadek T."/>
            <person name="Zouine M."/>
            <person name="Couve E."/>
            <person name="Lalioui L."/>
            <person name="Poyart C."/>
            <person name="Trieu-Cuot P."/>
            <person name="Kunst F."/>
        </authorList>
    </citation>
    <scope>NUCLEOTIDE SEQUENCE [LARGE SCALE GENOMIC DNA]</scope>
    <source>
        <strain>NEM316</strain>
    </source>
</reference>
<name>RPOE_STRA3</name>
<keyword id="KW-0240">DNA-directed RNA polymerase</keyword>
<keyword id="KW-0548">Nucleotidyltransferase</keyword>
<keyword id="KW-0804">Transcription</keyword>
<keyword id="KW-0808">Transferase</keyword>
<accession>Q8E7P9</accession>
<evidence type="ECO:0000255" key="1">
    <source>
        <dbReference type="HAMAP-Rule" id="MF_00357"/>
    </source>
</evidence>
<evidence type="ECO:0000255" key="2">
    <source>
        <dbReference type="PROSITE-ProRule" id="PRU01261"/>
    </source>
</evidence>
<evidence type="ECO:0000256" key="3">
    <source>
        <dbReference type="SAM" id="MobiDB-lite"/>
    </source>
</evidence>
<protein>
    <recommendedName>
        <fullName evidence="1">Probable DNA-directed RNA polymerase subunit delta</fullName>
    </recommendedName>
    <alternativeName>
        <fullName evidence="1">RNAP delta factor</fullName>
    </alternativeName>
</protein>
<comment type="function">
    <text evidence="1">Participates in both the initiation and recycling phases of transcription. In the presence of the delta subunit, RNAP displays an increased specificity of transcription, a decreased affinity for nucleic acids, and an increased efficiency of RNA synthesis because of enhanced recycling.</text>
</comment>
<comment type="subunit">
    <text evidence="1">RNAP is composed of a core of 2 alpha, a beta and a beta' subunits. The core is associated with a delta subunit and one of several sigma factors.</text>
</comment>
<comment type="similarity">
    <text evidence="1">Belongs to the RpoE family.</text>
</comment>
<organism>
    <name type="scientific">Streptococcus agalactiae serotype III (strain NEM316)</name>
    <dbReference type="NCBI Taxonomy" id="211110"/>
    <lineage>
        <taxon>Bacteria</taxon>
        <taxon>Bacillati</taxon>
        <taxon>Bacillota</taxon>
        <taxon>Bacilli</taxon>
        <taxon>Lactobacillales</taxon>
        <taxon>Streptococcaceae</taxon>
        <taxon>Streptococcus</taxon>
    </lineage>
</organism>
<dbReference type="EMBL" id="AL766843">
    <property type="protein sequence ID" value="CAD45750.1"/>
    <property type="molecule type" value="Genomic_DNA"/>
</dbReference>
<dbReference type="RefSeq" id="WP_000418426.1">
    <property type="nucleotide sequence ID" value="NC_004368.1"/>
</dbReference>
<dbReference type="SMR" id="Q8E7P9"/>
<dbReference type="KEGG" id="san:gbs0105"/>
<dbReference type="eggNOG" id="COG3343">
    <property type="taxonomic scope" value="Bacteria"/>
</dbReference>
<dbReference type="HOGENOM" id="CLU_116648_0_0_9"/>
<dbReference type="Proteomes" id="UP000000823">
    <property type="component" value="Chromosome"/>
</dbReference>
<dbReference type="GO" id="GO:0000428">
    <property type="term" value="C:DNA-directed RNA polymerase complex"/>
    <property type="evidence" value="ECO:0007669"/>
    <property type="project" value="UniProtKB-KW"/>
</dbReference>
<dbReference type="GO" id="GO:0003899">
    <property type="term" value="F:DNA-directed RNA polymerase activity"/>
    <property type="evidence" value="ECO:0007669"/>
    <property type="project" value="UniProtKB-UniRule"/>
</dbReference>
<dbReference type="GO" id="GO:0006351">
    <property type="term" value="P:DNA-templated transcription"/>
    <property type="evidence" value="ECO:0007669"/>
    <property type="project" value="InterPro"/>
</dbReference>
<dbReference type="GO" id="GO:0006355">
    <property type="term" value="P:regulation of DNA-templated transcription"/>
    <property type="evidence" value="ECO:0007669"/>
    <property type="project" value="UniProtKB-UniRule"/>
</dbReference>
<dbReference type="Gene3D" id="1.10.10.1250">
    <property type="entry name" value="RNA polymerase, subunit delta, N-terminal domain"/>
    <property type="match status" value="1"/>
</dbReference>
<dbReference type="HAMAP" id="MF_00357">
    <property type="entry name" value="RNApol_bact_RpoE"/>
    <property type="match status" value="1"/>
</dbReference>
<dbReference type="InterPro" id="IPR007759">
    <property type="entry name" value="Asxl_HARE-HTH"/>
</dbReference>
<dbReference type="InterPro" id="IPR038087">
    <property type="entry name" value="RNAP_delta_N_dom_sf"/>
</dbReference>
<dbReference type="InterPro" id="IPR029757">
    <property type="entry name" value="RpoE"/>
</dbReference>
<dbReference type="NCBIfam" id="TIGR04567">
    <property type="entry name" value="RNAP_delt_lowGC"/>
    <property type="match status" value="1"/>
</dbReference>
<dbReference type="Pfam" id="PF05066">
    <property type="entry name" value="HARE-HTH"/>
    <property type="match status" value="1"/>
</dbReference>
<dbReference type="PROSITE" id="PS51913">
    <property type="entry name" value="HTH_HARE"/>
    <property type="match status" value="1"/>
</dbReference>
<feature type="chain" id="PRO_0000303142" description="Probable DNA-directed RNA polymerase subunit delta">
    <location>
        <begin position="1"/>
        <end position="191"/>
    </location>
</feature>
<feature type="domain" description="HTH HARE-type" evidence="2">
    <location>
        <begin position="14"/>
        <end position="83"/>
    </location>
</feature>
<feature type="region of interest" description="Disordered" evidence="3">
    <location>
        <begin position="117"/>
        <end position="191"/>
    </location>
</feature>
<feature type="compositionally biased region" description="Acidic residues" evidence="3">
    <location>
        <begin position="117"/>
        <end position="136"/>
    </location>
</feature>
<feature type="compositionally biased region" description="Acidic residues" evidence="3">
    <location>
        <begin position="142"/>
        <end position="191"/>
    </location>
</feature>
<sequence>MELEVFAGQEKSELSMIEVARAILEQRGRDNEMYFSDLVNDIQTYLGKSDSAIRESLPFFYSDLNTDGSFIPLGENKWGLRSWYAIDEIDEEIITLEEDEDGAPKRKKKRVNAFMDGDEDAIDYNDDDPEDEDFTEETPSLEYDEENPDDEKSEVESYDSEINEIIPDEDLDEDVEINEEDDEEEEEEEEV</sequence>
<gene>
    <name evidence="1" type="primary">rpoE</name>
    <name type="ordered locus">gbs0105</name>
</gene>
<proteinExistence type="inferred from homology"/>